<evidence type="ECO:0000255" key="1">
    <source>
        <dbReference type="HAMAP-Rule" id="MF_01345"/>
    </source>
</evidence>
<evidence type="ECO:0000305" key="2"/>
<keyword id="KW-1185">Reference proteome</keyword>
<keyword id="KW-0687">Ribonucleoprotein</keyword>
<keyword id="KW-0689">Ribosomal protein</keyword>
<keyword id="KW-0694">RNA-binding</keyword>
<keyword id="KW-0699">rRNA-binding</keyword>
<reference key="1">
    <citation type="journal article" date="2005" name="PLoS Biol.">
        <title>The Wolbachia genome of Brugia malayi: endosymbiont evolution within a human pathogenic nematode.</title>
        <authorList>
            <person name="Foster J."/>
            <person name="Ganatra M."/>
            <person name="Kamal I."/>
            <person name="Ware J."/>
            <person name="Makarova K."/>
            <person name="Ivanova N."/>
            <person name="Bhattacharyya A."/>
            <person name="Kapatral V."/>
            <person name="Kumar S."/>
            <person name="Posfai J."/>
            <person name="Vincze T."/>
            <person name="Ingram J."/>
            <person name="Moran L."/>
            <person name="Lapidus A."/>
            <person name="Omelchenko M."/>
            <person name="Kyrpides N."/>
            <person name="Ghedin E."/>
            <person name="Wang S."/>
            <person name="Goltsman E."/>
            <person name="Joukov V."/>
            <person name="Ostrovskaya O."/>
            <person name="Tsukerman K."/>
            <person name="Mazur M."/>
            <person name="Comb D."/>
            <person name="Koonin E."/>
            <person name="Slatko B."/>
        </authorList>
    </citation>
    <scope>NUCLEOTIDE SEQUENCE [LARGE SCALE GENOMIC DNA]</scope>
    <source>
        <strain>TRS</strain>
    </source>
</reference>
<gene>
    <name evidence="1" type="primary">rpsQ</name>
    <name type="ordered locus">Wbm0332</name>
</gene>
<dbReference type="EMBL" id="AE017321">
    <property type="protein sequence ID" value="AAW70921.1"/>
    <property type="molecule type" value="Genomic_DNA"/>
</dbReference>
<dbReference type="RefSeq" id="WP_011256531.1">
    <property type="nucleotide sequence ID" value="NC_006833.1"/>
</dbReference>
<dbReference type="SMR" id="Q5GSV3"/>
<dbReference type="STRING" id="292805.Wbm0332"/>
<dbReference type="KEGG" id="wbm:Wbm0332"/>
<dbReference type="eggNOG" id="COG0186">
    <property type="taxonomic scope" value="Bacteria"/>
</dbReference>
<dbReference type="HOGENOM" id="CLU_073626_1_1_5"/>
<dbReference type="Proteomes" id="UP000000534">
    <property type="component" value="Chromosome"/>
</dbReference>
<dbReference type="GO" id="GO:0022627">
    <property type="term" value="C:cytosolic small ribosomal subunit"/>
    <property type="evidence" value="ECO:0007669"/>
    <property type="project" value="TreeGrafter"/>
</dbReference>
<dbReference type="GO" id="GO:0019843">
    <property type="term" value="F:rRNA binding"/>
    <property type="evidence" value="ECO:0007669"/>
    <property type="project" value="UniProtKB-UniRule"/>
</dbReference>
<dbReference type="GO" id="GO:0003735">
    <property type="term" value="F:structural constituent of ribosome"/>
    <property type="evidence" value="ECO:0007669"/>
    <property type="project" value="InterPro"/>
</dbReference>
<dbReference type="GO" id="GO:0006412">
    <property type="term" value="P:translation"/>
    <property type="evidence" value="ECO:0007669"/>
    <property type="project" value="UniProtKB-UniRule"/>
</dbReference>
<dbReference type="CDD" id="cd00364">
    <property type="entry name" value="Ribosomal_uS17"/>
    <property type="match status" value="1"/>
</dbReference>
<dbReference type="Gene3D" id="2.40.50.140">
    <property type="entry name" value="Nucleic acid-binding proteins"/>
    <property type="match status" value="1"/>
</dbReference>
<dbReference type="HAMAP" id="MF_01345_B">
    <property type="entry name" value="Ribosomal_uS17_B"/>
    <property type="match status" value="1"/>
</dbReference>
<dbReference type="InterPro" id="IPR012340">
    <property type="entry name" value="NA-bd_OB-fold"/>
</dbReference>
<dbReference type="InterPro" id="IPR000266">
    <property type="entry name" value="Ribosomal_uS17"/>
</dbReference>
<dbReference type="InterPro" id="IPR019984">
    <property type="entry name" value="Ribosomal_uS17_bact/chlr"/>
</dbReference>
<dbReference type="InterPro" id="IPR019979">
    <property type="entry name" value="Ribosomal_uS17_CS"/>
</dbReference>
<dbReference type="NCBIfam" id="NF004123">
    <property type="entry name" value="PRK05610.1"/>
    <property type="match status" value="1"/>
</dbReference>
<dbReference type="NCBIfam" id="TIGR03635">
    <property type="entry name" value="uS17_bact"/>
    <property type="match status" value="1"/>
</dbReference>
<dbReference type="PANTHER" id="PTHR10744">
    <property type="entry name" value="40S RIBOSOMAL PROTEIN S11 FAMILY MEMBER"/>
    <property type="match status" value="1"/>
</dbReference>
<dbReference type="PANTHER" id="PTHR10744:SF1">
    <property type="entry name" value="SMALL RIBOSOMAL SUBUNIT PROTEIN US17M"/>
    <property type="match status" value="1"/>
</dbReference>
<dbReference type="Pfam" id="PF00366">
    <property type="entry name" value="Ribosomal_S17"/>
    <property type="match status" value="1"/>
</dbReference>
<dbReference type="PRINTS" id="PR00973">
    <property type="entry name" value="RIBOSOMALS17"/>
</dbReference>
<dbReference type="SUPFAM" id="SSF50249">
    <property type="entry name" value="Nucleic acid-binding proteins"/>
    <property type="match status" value="1"/>
</dbReference>
<dbReference type="PROSITE" id="PS00056">
    <property type="entry name" value="RIBOSOMAL_S17"/>
    <property type="match status" value="1"/>
</dbReference>
<protein>
    <recommendedName>
        <fullName evidence="1">Small ribosomal subunit protein uS17</fullName>
    </recommendedName>
    <alternativeName>
        <fullName evidence="2">30S ribosomal protein S17</fullName>
    </alternativeName>
</protein>
<name>RS17_WOLTR</name>
<comment type="function">
    <text evidence="1">One of the primary rRNA binding proteins, it binds specifically to the 5'-end of 16S ribosomal RNA.</text>
</comment>
<comment type="subunit">
    <text evidence="1">Part of the 30S ribosomal subunit.</text>
</comment>
<comment type="similarity">
    <text evidence="1">Belongs to the universal ribosomal protein uS17 family.</text>
</comment>
<sequence>MPKKVFCGVVTKAKCDKTVKVSVLRVYKDKLYKKVIKRYKEYTVHDENNSCKEGDKVFIQEHRPISATKKWVIVRVE</sequence>
<accession>Q5GSV3</accession>
<organism>
    <name type="scientific">Wolbachia sp. subsp. Brugia malayi (strain TRS)</name>
    <dbReference type="NCBI Taxonomy" id="292805"/>
    <lineage>
        <taxon>Bacteria</taxon>
        <taxon>Pseudomonadati</taxon>
        <taxon>Pseudomonadota</taxon>
        <taxon>Alphaproteobacteria</taxon>
        <taxon>Rickettsiales</taxon>
        <taxon>Anaplasmataceae</taxon>
        <taxon>Wolbachieae</taxon>
        <taxon>Wolbachia</taxon>
    </lineage>
</organism>
<feature type="chain" id="PRO_0000233610" description="Small ribosomal subunit protein uS17">
    <location>
        <begin position="1"/>
        <end position="77"/>
    </location>
</feature>
<proteinExistence type="inferred from homology"/>